<keyword id="KW-1003">Cell membrane</keyword>
<keyword id="KW-0175">Coiled coil</keyword>
<keyword id="KW-0407">Ion channel</keyword>
<keyword id="KW-0406">Ion transport</keyword>
<keyword id="KW-0472">Membrane</keyword>
<keyword id="KW-1185">Reference proteome</keyword>
<keyword id="KW-0812">Transmembrane</keyword>
<keyword id="KW-1133">Transmembrane helix</keyword>
<keyword id="KW-0813">Transport</keyword>
<keyword id="KW-0851">Voltage-gated channel</keyword>
<reference key="1">
    <citation type="journal article" date="2005" name="Genome Biol.">
        <title>Full-length cDNAs from chicken bursal lymphocytes to facilitate gene function analysis.</title>
        <authorList>
            <person name="Caldwell R.B."/>
            <person name="Kierzek A.M."/>
            <person name="Arakawa H."/>
            <person name="Bezzubov Y."/>
            <person name="Zaim J."/>
            <person name="Fiedler P."/>
            <person name="Kutter S."/>
            <person name="Blagodatski A."/>
            <person name="Kostovska D."/>
            <person name="Koter M."/>
            <person name="Plachy J."/>
            <person name="Carninci P."/>
            <person name="Hayashizaki Y."/>
            <person name="Buerstedde J.-M."/>
        </authorList>
    </citation>
    <scope>NUCLEOTIDE SEQUENCE [LARGE SCALE MRNA]</scope>
    <source>
        <strain>CB</strain>
        <tissue>Bursa of Fabricius</tissue>
    </source>
</reference>
<evidence type="ECO:0000250" key="1"/>
<evidence type="ECO:0000255" key="2"/>
<evidence type="ECO:0000305" key="3"/>
<dbReference type="EMBL" id="AJ720545">
    <property type="protein sequence ID" value="CAG32204.1"/>
    <property type="molecule type" value="mRNA"/>
</dbReference>
<dbReference type="EMBL" id="AJ851380">
    <property type="protein sequence ID" value="CAH65014.1"/>
    <property type="molecule type" value="mRNA"/>
</dbReference>
<dbReference type="RefSeq" id="NP_001025834.1">
    <property type="nucleotide sequence ID" value="NM_001030663.1"/>
</dbReference>
<dbReference type="SMR" id="Q5F4C0"/>
<dbReference type="FunCoup" id="Q5F4C0">
    <property type="interactions" value="1"/>
</dbReference>
<dbReference type="STRING" id="9031.ENSGALP00000007248"/>
<dbReference type="PaxDb" id="9031-ENSGALP00000007248"/>
<dbReference type="GeneID" id="416871"/>
<dbReference type="KEGG" id="gga:416871"/>
<dbReference type="CTD" id="84329"/>
<dbReference type="VEuPathDB" id="HostDB:geneid_416871"/>
<dbReference type="eggNOG" id="ENOG502RX8B">
    <property type="taxonomic scope" value="Eukaryota"/>
</dbReference>
<dbReference type="InParanoid" id="Q5F4C0"/>
<dbReference type="OrthoDB" id="427456at2759"/>
<dbReference type="PhylomeDB" id="Q5F4C0"/>
<dbReference type="PRO" id="PR:Q5F4C0"/>
<dbReference type="Proteomes" id="UP000000539">
    <property type="component" value="Unassembled WGS sequence"/>
</dbReference>
<dbReference type="GO" id="GO:0016020">
    <property type="term" value="C:membrane"/>
    <property type="evidence" value="ECO:0000250"/>
    <property type="project" value="HGNC-UCL"/>
</dbReference>
<dbReference type="GO" id="GO:0034702">
    <property type="term" value="C:monoatomic ion channel complex"/>
    <property type="evidence" value="ECO:0007669"/>
    <property type="project" value="UniProtKB-KW"/>
</dbReference>
<dbReference type="GO" id="GO:0005886">
    <property type="term" value="C:plasma membrane"/>
    <property type="evidence" value="ECO:0000250"/>
    <property type="project" value="UniProtKB"/>
</dbReference>
<dbReference type="GO" id="GO:0030171">
    <property type="term" value="F:voltage-gated proton channel activity"/>
    <property type="evidence" value="ECO:0000250"/>
    <property type="project" value="HGNC-UCL"/>
</dbReference>
<dbReference type="GO" id="GO:0071467">
    <property type="term" value="P:cellular response to pH"/>
    <property type="evidence" value="ECO:0000250"/>
    <property type="project" value="UniProtKB"/>
</dbReference>
<dbReference type="GO" id="GO:0071294">
    <property type="term" value="P:cellular response to zinc ion"/>
    <property type="evidence" value="ECO:0000250"/>
    <property type="project" value="UniProtKB"/>
</dbReference>
<dbReference type="GO" id="GO:1902600">
    <property type="term" value="P:proton transmembrane transport"/>
    <property type="evidence" value="ECO:0000250"/>
    <property type="project" value="UniProtKB"/>
</dbReference>
<dbReference type="GO" id="GO:0009268">
    <property type="term" value="P:response to pH"/>
    <property type="evidence" value="ECO:0000250"/>
    <property type="project" value="HGNC-UCL"/>
</dbReference>
<dbReference type="GO" id="GO:0010043">
    <property type="term" value="P:response to zinc ion"/>
    <property type="evidence" value="ECO:0000250"/>
    <property type="project" value="HGNC-UCL"/>
</dbReference>
<dbReference type="FunFam" id="1.20.5.170:FF:000073">
    <property type="entry name" value="Voltage-gated hydrogen channel 1"/>
    <property type="match status" value="1"/>
</dbReference>
<dbReference type="FunFam" id="1.20.120.350:FF:000054">
    <property type="entry name" value="voltage-gated hydrogen channel 1"/>
    <property type="match status" value="1"/>
</dbReference>
<dbReference type="Gene3D" id="1.20.5.170">
    <property type="match status" value="1"/>
</dbReference>
<dbReference type="Gene3D" id="1.20.120.350">
    <property type="entry name" value="Voltage-gated potassium channels. Chain C"/>
    <property type="match status" value="1"/>
</dbReference>
<dbReference type="InterPro" id="IPR031846">
    <property type="entry name" value="Hvcn1"/>
</dbReference>
<dbReference type="InterPro" id="IPR005821">
    <property type="entry name" value="Ion_trans_dom"/>
</dbReference>
<dbReference type="InterPro" id="IPR031844">
    <property type="entry name" value="VGPC1_C"/>
</dbReference>
<dbReference type="InterPro" id="IPR027359">
    <property type="entry name" value="Volt_channel_dom_sf"/>
</dbReference>
<dbReference type="PANTHER" id="PTHR46480">
    <property type="entry name" value="F20B24.22"/>
    <property type="match status" value="1"/>
</dbReference>
<dbReference type="PANTHER" id="PTHR46480:SF1">
    <property type="entry name" value="VOLTAGE-GATED HYDROGEN CHANNEL 1"/>
    <property type="match status" value="1"/>
</dbReference>
<dbReference type="Pfam" id="PF00520">
    <property type="entry name" value="Ion_trans"/>
    <property type="match status" value="1"/>
</dbReference>
<dbReference type="Pfam" id="PF16799">
    <property type="entry name" value="VGPC1_C"/>
    <property type="match status" value="1"/>
</dbReference>
<dbReference type="SUPFAM" id="SSF81324">
    <property type="entry name" value="Voltage-gated potassium channels"/>
    <property type="match status" value="1"/>
</dbReference>
<gene>
    <name type="primary">HVCN1</name>
    <name type="ORF">RCJMB04_1c7</name>
</gene>
<comment type="function">
    <text evidence="1">Mediates the voltage-dependent proton permeability of excitable membranes. Forms a proton-selective channel through which protons may pass in accordance with their electrochemical gradient (By similarity).</text>
</comment>
<comment type="subunit">
    <text evidence="1">Homodimer.</text>
</comment>
<comment type="subcellular location">
    <subcellularLocation>
        <location evidence="3">Membrane</location>
        <topology evidence="3">Multi-pass membrane protein</topology>
    </subcellularLocation>
    <subcellularLocation>
        <location evidence="1">Cell membrane</location>
        <topology evidence="1">Multi-pass membrane protein</topology>
    </subcellularLocation>
</comment>
<comment type="domain">
    <text evidence="1">The segment S4 is probably the voltage-sensor and is characterized by a series of positively charged amino acids at every third position. Unlike other voltage-gated ion channels it lacks the pore domain (By similarity).</text>
</comment>
<comment type="domain">
    <text evidence="1">The C-terminal coiled coil region mediates homodimerization. It is essential for normal subcellular localization (By similarity).</text>
</comment>
<comment type="similarity">
    <text evidence="3">Belongs to the hydrogen channel family.</text>
</comment>
<organism>
    <name type="scientific">Gallus gallus</name>
    <name type="common">Chicken</name>
    <dbReference type="NCBI Taxonomy" id="9031"/>
    <lineage>
        <taxon>Eukaryota</taxon>
        <taxon>Metazoa</taxon>
        <taxon>Chordata</taxon>
        <taxon>Craniata</taxon>
        <taxon>Vertebrata</taxon>
        <taxon>Euteleostomi</taxon>
        <taxon>Archelosauria</taxon>
        <taxon>Archosauria</taxon>
        <taxon>Dinosauria</taxon>
        <taxon>Saurischia</taxon>
        <taxon>Theropoda</taxon>
        <taxon>Coelurosauria</taxon>
        <taxon>Aves</taxon>
        <taxon>Neognathae</taxon>
        <taxon>Galloanserae</taxon>
        <taxon>Galliformes</taxon>
        <taxon>Phasianidae</taxon>
        <taxon>Phasianinae</taxon>
        <taxon>Gallus</taxon>
    </lineage>
</organism>
<feature type="chain" id="PRO_0000342189" description="Voltage-gated hydrogen channel 1">
    <location>
        <begin position="1"/>
        <end position="235"/>
    </location>
</feature>
<feature type="topological domain" description="Cytoplasmic" evidence="1">
    <location>
        <begin position="1"/>
        <end position="62"/>
    </location>
</feature>
<feature type="transmembrane region" description="Helical; Name=Segment S1" evidence="1">
    <location>
        <begin position="63"/>
        <end position="83"/>
    </location>
</feature>
<feature type="topological domain" description="Extracellular" evidence="1">
    <location>
        <begin position="84"/>
        <end position="100"/>
    </location>
</feature>
<feature type="transmembrane region" description="Helical; Name=Segment S2" evidence="1">
    <location>
        <begin position="101"/>
        <end position="123"/>
    </location>
</feature>
<feature type="topological domain" description="Cytoplasmic" evidence="1">
    <location>
        <begin position="124"/>
        <end position="131"/>
    </location>
</feature>
<feature type="transmembrane region" description="Helical; Name=Segment S3" evidence="1">
    <location>
        <begin position="132"/>
        <end position="152"/>
    </location>
</feature>
<feature type="topological domain" description="Extracellular" evidence="1">
    <location>
        <begin position="153"/>
        <end position="159"/>
    </location>
</feature>
<feature type="transmembrane region" description="Helical; Name=Segment S4" evidence="1">
    <location>
        <begin position="160"/>
        <end position="180"/>
    </location>
</feature>
<feature type="topological domain" description="Cytoplasmic" evidence="1">
    <location>
        <begin position="181"/>
        <end position="235"/>
    </location>
</feature>
<feature type="coiled-coil region" evidence="2">
    <location>
        <begin position="187"/>
        <end position="228"/>
    </location>
</feature>
<sequence length="235" mass="27599">MSRYLKHFTVVGDDPIQWSNDYQKWENEEEDNGEKDSEIKLEPSRGHVTFQDVMKKLFSSRRFQIVIVFLVIVDALLVLGELLMDLKIIHPDKYHIAPKVFHYLSLSILTIFLVEVGFKIFVYGREFFHHKFEVLDSIVVVVSFILDLVLLFREHEFEAVGLLILLRLWRVARIINGIILSVKTRSEQQVSKLKQVNLKLATKVEQLQHSCVEKEQEIERLTRMLKQHGLLSEQT</sequence>
<name>HVCN1_CHICK</name>
<proteinExistence type="evidence at transcript level"/>
<accession>Q5F4C0</accession>
<accession>Q5ZJ89</accession>
<protein>
    <recommendedName>
        <fullName>Voltage-gated hydrogen channel 1</fullName>
    </recommendedName>
    <alternativeName>
        <fullName>Hydrogen voltage-gated channel 1</fullName>
        <shortName>HV1</shortName>
    </alternativeName>
</protein>